<dbReference type="EC" id="2.7.4.25" evidence="1"/>
<dbReference type="EMBL" id="AE005176">
    <property type="protein sequence ID" value="AAK05801.1"/>
    <property type="molecule type" value="Genomic_DNA"/>
</dbReference>
<dbReference type="PIR" id="G86837">
    <property type="entry name" value="G86837"/>
</dbReference>
<dbReference type="RefSeq" id="NP_267859.1">
    <property type="nucleotide sequence ID" value="NC_002662.1"/>
</dbReference>
<dbReference type="RefSeq" id="WP_003130902.1">
    <property type="nucleotide sequence ID" value="NC_002662.1"/>
</dbReference>
<dbReference type="SMR" id="Q9CEY1"/>
<dbReference type="PaxDb" id="272623-L143791"/>
<dbReference type="EnsemblBacteria" id="AAK05801">
    <property type="protein sequence ID" value="AAK05801"/>
    <property type="gene ID" value="L143791"/>
</dbReference>
<dbReference type="GeneID" id="89633904"/>
<dbReference type="KEGG" id="lla:L143791"/>
<dbReference type="PATRIC" id="fig|272623.7.peg.1827"/>
<dbReference type="eggNOG" id="COG0283">
    <property type="taxonomic scope" value="Bacteria"/>
</dbReference>
<dbReference type="HOGENOM" id="CLU_079959_0_2_9"/>
<dbReference type="OrthoDB" id="9807434at2"/>
<dbReference type="Proteomes" id="UP000002196">
    <property type="component" value="Chromosome"/>
</dbReference>
<dbReference type="GO" id="GO:0005829">
    <property type="term" value="C:cytosol"/>
    <property type="evidence" value="ECO:0007669"/>
    <property type="project" value="TreeGrafter"/>
</dbReference>
<dbReference type="GO" id="GO:0005524">
    <property type="term" value="F:ATP binding"/>
    <property type="evidence" value="ECO:0007669"/>
    <property type="project" value="UniProtKB-UniRule"/>
</dbReference>
<dbReference type="GO" id="GO:0036430">
    <property type="term" value="F:CMP kinase activity"/>
    <property type="evidence" value="ECO:0007669"/>
    <property type="project" value="RHEA"/>
</dbReference>
<dbReference type="GO" id="GO:0036431">
    <property type="term" value="F:dCMP kinase activity"/>
    <property type="evidence" value="ECO:0007669"/>
    <property type="project" value="RHEA"/>
</dbReference>
<dbReference type="GO" id="GO:0015949">
    <property type="term" value="P:nucleobase-containing small molecule interconversion"/>
    <property type="evidence" value="ECO:0007669"/>
    <property type="project" value="TreeGrafter"/>
</dbReference>
<dbReference type="GO" id="GO:0006220">
    <property type="term" value="P:pyrimidine nucleotide metabolic process"/>
    <property type="evidence" value="ECO:0007669"/>
    <property type="project" value="UniProtKB-UniRule"/>
</dbReference>
<dbReference type="CDD" id="cd02020">
    <property type="entry name" value="CMPK"/>
    <property type="match status" value="1"/>
</dbReference>
<dbReference type="Gene3D" id="3.40.50.300">
    <property type="entry name" value="P-loop containing nucleotide triphosphate hydrolases"/>
    <property type="match status" value="1"/>
</dbReference>
<dbReference type="HAMAP" id="MF_00238">
    <property type="entry name" value="Cytidyl_kinase_type1"/>
    <property type="match status" value="1"/>
</dbReference>
<dbReference type="InterPro" id="IPR003136">
    <property type="entry name" value="Cytidylate_kin"/>
</dbReference>
<dbReference type="InterPro" id="IPR011994">
    <property type="entry name" value="Cytidylate_kinase_dom"/>
</dbReference>
<dbReference type="InterPro" id="IPR027417">
    <property type="entry name" value="P-loop_NTPase"/>
</dbReference>
<dbReference type="NCBIfam" id="TIGR00017">
    <property type="entry name" value="cmk"/>
    <property type="match status" value="1"/>
</dbReference>
<dbReference type="PANTHER" id="PTHR21299:SF2">
    <property type="entry name" value="CYTIDYLATE KINASE"/>
    <property type="match status" value="1"/>
</dbReference>
<dbReference type="PANTHER" id="PTHR21299">
    <property type="entry name" value="CYTIDYLATE KINASE/PANTOATE-BETA-ALANINE LIGASE"/>
    <property type="match status" value="1"/>
</dbReference>
<dbReference type="Pfam" id="PF02224">
    <property type="entry name" value="Cytidylate_kin"/>
    <property type="match status" value="1"/>
</dbReference>
<dbReference type="SUPFAM" id="SSF52540">
    <property type="entry name" value="P-loop containing nucleoside triphosphate hydrolases"/>
    <property type="match status" value="1"/>
</dbReference>
<feature type="chain" id="PRO_0000131924" description="Cytidylate kinase">
    <location>
        <begin position="1"/>
        <end position="220"/>
    </location>
</feature>
<feature type="binding site" evidence="1">
    <location>
        <begin position="10"/>
        <end position="18"/>
    </location>
    <ligand>
        <name>ATP</name>
        <dbReference type="ChEBI" id="CHEBI:30616"/>
    </ligand>
</feature>
<keyword id="KW-0067">ATP-binding</keyword>
<keyword id="KW-0963">Cytoplasm</keyword>
<keyword id="KW-0418">Kinase</keyword>
<keyword id="KW-0547">Nucleotide-binding</keyword>
<keyword id="KW-1185">Reference proteome</keyword>
<keyword id="KW-0808">Transferase</keyword>
<protein>
    <recommendedName>
        <fullName evidence="1">Cytidylate kinase</fullName>
        <shortName evidence="1">CK</shortName>
        <ecNumber evidence="1">2.7.4.25</ecNumber>
    </recommendedName>
    <alternativeName>
        <fullName evidence="1">Cytidine monophosphate kinase</fullName>
        <shortName evidence="1">CMP kinase</shortName>
    </alternativeName>
</protein>
<evidence type="ECO:0000255" key="1">
    <source>
        <dbReference type="HAMAP-Rule" id="MF_00238"/>
    </source>
</evidence>
<comment type="catalytic activity">
    <reaction evidence="1">
        <text>CMP + ATP = CDP + ADP</text>
        <dbReference type="Rhea" id="RHEA:11600"/>
        <dbReference type="ChEBI" id="CHEBI:30616"/>
        <dbReference type="ChEBI" id="CHEBI:58069"/>
        <dbReference type="ChEBI" id="CHEBI:60377"/>
        <dbReference type="ChEBI" id="CHEBI:456216"/>
        <dbReference type="EC" id="2.7.4.25"/>
    </reaction>
</comment>
<comment type="catalytic activity">
    <reaction evidence="1">
        <text>dCMP + ATP = dCDP + ADP</text>
        <dbReference type="Rhea" id="RHEA:25094"/>
        <dbReference type="ChEBI" id="CHEBI:30616"/>
        <dbReference type="ChEBI" id="CHEBI:57566"/>
        <dbReference type="ChEBI" id="CHEBI:58593"/>
        <dbReference type="ChEBI" id="CHEBI:456216"/>
        <dbReference type="EC" id="2.7.4.25"/>
    </reaction>
</comment>
<comment type="subcellular location">
    <subcellularLocation>
        <location evidence="1">Cytoplasm</location>
    </subcellularLocation>
</comment>
<comment type="similarity">
    <text evidence="1">Belongs to the cytidylate kinase family. Type 1 subfamily.</text>
</comment>
<name>KCY_LACLA</name>
<organism>
    <name type="scientific">Lactococcus lactis subsp. lactis (strain IL1403)</name>
    <name type="common">Streptococcus lactis</name>
    <dbReference type="NCBI Taxonomy" id="272623"/>
    <lineage>
        <taxon>Bacteria</taxon>
        <taxon>Bacillati</taxon>
        <taxon>Bacillota</taxon>
        <taxon>Bacilli</taxon>
        <taxon>Lactobacillales</taxon>
        <taxon>Streptococcaceae</taxon>
        <taxon>Lactococcus</taxon>
    </lineage>
</organism>
<proteinExistence type="inferred from homology"/>
<gene>
    <name evidence="1" type="primary">cmk</name>
    <name type="ordered locus">LL1703</name>
    <name type="ORF">L143791</name>
</gene>
<sequence length="220" mass="24548">MKKIQIAIDGPASSGKSTVAKIIARNLDLIYLDTGAMYRVATFVALQKETDDAKEIIEFIEKNPISFMNGQKGQEVLMGSENVTEVIRTNEVTNTVSKISAMTEIREFMVAEQQRIAKNGGIIMDGRDIGTVVLPKADLKIFLVASVDERAERRYKENLSKGIPTDLERLKIEISERDRKDSTRAISPLKQAEDAILLDSTGKTINEIVQFIEDKAKELM</sequence>
<accession>Q9CEY1</accession>
<reference key="1">
    <citation type="journal article" date="2001" name="Genome Res.">
        <title>The complete genome sequence of the lactic acid bacterium Lactococcus lactis ssp. lactis IL1403.</title>
        <authorList>
            <person name="Bolotin A."/>
            <person name="Wincker P."/>
            <person name="Mauger S."/>
            <person name="Jaillon O."/>
            <person name="Malarme K."/>
            <person name="Weissenbach J."/>
            <person name="Ehrlich S.D."/>
            <person name="Sorokin A."/>
        </authorList>
    </citation>
    <scope>NUCLEOTIDE SEQUENCE [LARGE SCALE GENOMIC DNA]</scope>
    <source>
        <strain>IL1403</strain>
    </source>
</reference>